<reference key="1">
    <citation type="journal article" date="2004" name="Nature">
        <title>Genome evolution in yeasts.</title>
        <authorList>
            <person name="Dujon B."/>
            <person name="Sherman D."/>
            <person name="Fischer G."/>
            <person name="Durrens P."/>
            <person name="Casaregola S."/>
            <person name="Lafontaine I."/>
            <person name="de Montigny J."/>
            <person name="Marck C."/>
            <person name="Neuveglise C."/>
            <person name="Talla E."/>
            <person name="Goffard N."/>
            <person name="Frangeul L."/>
            <person name="Aigle M."/>
            <person name="Anthouard V."/>
            <person name="Babour A."/>
            <person name="Barbe V."/>
            <person name="Barnay S."/>
            <person name="Blanchin S."/>
            <person name="Beckerich J.-M."/>
            <person name="Beyne E."/>
            <person name="Bleykasten C."/>
            <person name="Boisrame A."/>
            <person name="Boyer J."/>
            <person name="Cattolico L."/>
            <person name="Confanioleri F."/>
            <person name="de Daruvar A."/>
            <person name="Despons L."/>
            <person name="Fabre E."/>
            <person name="Fairhead C."/>
            <person name="Ferry-Dumazet H."/>
            <person name="Groppi A."/>
            <person name="Hantraye F."/>
            <person name="Hennequin C."/>
            <person name="Jauniaux N."/>
            <person name="Joyet P."/>
            <person name="Kachouri R."/>
            <person name="Kerrest A."/>
            <person name="Koszul R."/>
            <person name="Lemaire M."/>
            <person name="Lesur I."/>
            <person name="Ma L."/>
            <person name="Muller H."/>
            <person name="Nicaud J.-M."/>
            <person name="Nikolski M."/>
            <person name="Oztas S."/>
            <person name="Ozier-Kalogeropoulos O."/>
            <person name="Pellenz S."/>
            <person name="Potier S."/>
            <person name="Richard G.-F."/>
            <person name="Straub M.-L."/>
            <person name="Suleau A."/>
            <person name="Swennen D."/>
            <person name="Tekaia F."/>
            <person name="Wesolowski-Louvel M."/>
            <person name="Westhof E."/>
            <person name="Wirth B."/>
            <person name="Zeniou-Meyer M."/>
            <person name="Zivanovic Y."/>
            <person name="Bolotin-Fukuhara M."/>
            <person name="Thierry A."/>
            <person name="Bouchier C."/>
            <person name="Caudron B."/>
            <person name="Scarpelli C."/>
            <person name="Gaillardin C."/>
            <person name="Weissenbach J."/>
            <person name="Wincker P."/>
            <person name="Souciet J.-L."/>
        </authorList>
    </citation>
    <scope>NUCLEOTIDE SEQUENCE [LARGE SCALE GENOMIC DNA]</scope>
    <source>
        <strain>ATCC 2001 / BCRC 20586 / JCM 3761 / NBRC 0622 / NRRL Y-65 / CBS 138</strain>
    </source>
</reference>
<sequence length="613" mass="71750">MLEDALVPDDKLIYVSPENLYYCYANDTIDQDDKWTSIQPQQGYIPILSANLRAYKIELLKKLRFSGQNNVSPSIKKEKKNLEPNKKITTKPTESTGSKKYLIPEQFIPDSLEKQLRTLTVILKDALYLGKNNRFIKENEVVSDDTRLLILDEFLKLIIPNYIDSLANWTLVDLNKGTDDESLLYLRFNESGTQSMISFYKKHSKMAKYMEIHYDTNTEKYINDNFKDDGDEDNVEAEQSHSVGEILKSMETAFEKARSQVGTFKGDINDDQDDKINYKIDYNTLLDIPSDSLEQLTKEILNFRTKVIDIEKQKQLRQQYEDNERRQKHMTQLFEKLRKGTKSNDSNRNMDIESTDTINDSDSEEDDDEEDEDDLAIEKRKEEKRKEEEARKYRALLKDYETTIEPHLHLLSQQYKQNLEYEKELAANREANVKDLLRQANDIYYDKDRSFKDREEQEDKLDREKYGDIIIEDIVIDDDRKGQKKLLEKDKKVKKAGEPAIKINLAFKKAMDNSIQDKRDKAEDIEPVSQPIEARSTNRYAALKEKRVVDELVKELLGVYEDDVVAYVFEILEKPEMSDEKKQSELVTEMEDLFDKEGAVQFAEQVFKALDEA</sequence>
<name>SNU71_CANGA</name>
<dbReference type="EMBL" id="CR380952">
    <property type="protein sequence ID" value="CAG59276.1"/>
    <property type="molecule type" value="Genomic_DNA"/>
</dbReference>
<dbReference type="RefSeq" id="XP_446352.1">
    <property type="nucleotide sequence ID" value="XM_446352.1"/>
</dbReference>
<dbReference type="SMR" id="Q6FTU2"/>
<dbReference type="FunCoup" id="Q6FTU2">
    <property type="interactions" value="198"/>
</dbReference>
<dbReference type="STRING" id="284593.Q6FTU2"/>
<dbReference type="EnsemblFungi" id="CAGL0F08811g-T">
    <property type="protein sequence ID" value="CAGL0F08811g-T-p1"/>
    <property type="gene ID" value="CAGL0F08811g"/>
</dbReference>
<dbReference type="KEGG" id="cgr:2887569"/>
<dbReference type="CGD" id="CAL0131178">
    <property type="gene designation" value="CAGL0F08811g"/>
</dbReference>
<dbReference type="VEuPathDB" id="FungiDB:CAGL0F08811g"/>
<dbReference type="eggNOG" id="KOG2253">
    <property type="taxonomic scope" value="Eukaryota"/>
</dbReference>
<dbReference type="HOGENOM" id="CLU_031562_0_0_1"/>
<dbReference type="InParanoid" id="Q6FTU2"/>
<dbReference type="OMA" id="YDHHRSF"/>
<dbReference type="Proteomes" id="UP000002428">
    <property type="component" value="Chromosome F"/>
</dbReference>
<dbReference type="GO" id="GO:0005737">
    <property type="term" value="C:cytoplasm"/>
    <property type="evidence" value="ECO:0007669"/>
    <property type="project" value="UniProtKB-SubCell"/>
</dbReference>
<dbReference type="GO" id="GO:0005681">
    <property type="term" value="C:spliceosomal complex"/>
    <property type="evidence" value="ECO:0007669"/>
    <property type="project" value="UniProtKB-KW"/>
</dbReference>
<dbReference type="GO" id="GO:0003723">
    <property type="term" value="F:RNA binding"/>
    <property type="evidence" value="ECO:0007669"/>
    <property type="project" value="UniProtKB-KW"/>
</dbReference>
<dbReference type="GO" id="GO:0006397">
    <property type="term" value="P:mRNA processing"/>
    <property type="evidence" value="ECO:0007669"/>
    <property type="project" value="UniProtKB-KW"/>
</dbReference>
<dbReference type="GO" id="GO:0008380">
    <property type="term" value="P:RNA splicing"/>
    <property type="evidence" value="ECO:0007669"/>
    <property type="project" value="UniProtKB-KW"/>
</dbReference>
<dbReference type="Gene3D" id="1.20.1390.10">
    <property type="entry name" value="PWI domain"/>
    <property type="match status" value="1"/>
</dbReference>
<dbReference type="InterPro" id="IPR002483">
    <property type="entry name" value="PWI_dom"/>
</dbReference>
<dbReference type="Pfam" id="PF01480">
    <property type="entry name" value="PWI"/>
    <property type="match status" value="1"/>
</dbReference>
<proteinExistence type="inferred from homology"/>
<organism>
    <name type="scientific">Candida glabrata (strain ATCC 2001 / BCRC 20586 / JCM 3761 / NBRC 0622 / NRRL Y-65 / CBS 138)</name>
    <name type="common">Yeast</name>
    <name type="synonym">Nakaseomyces glabratus</name>
    <dbReference type="NCBI Taxonomy" id="284593"/>
    <lineage>
        <taxon>Eukaryota</taxon>
        <taxon>Fungi</taxon>
        <taxon>Dikarya</taxon>
        <taxon>Ascomycota</taxon>
        <taxon>Saccharomycotina</taxon>
        <taxon>Saccharomycetes</taxon>
        <taxon>Saccharomycetales</taxon>
        <taxon>Saccharomycetaceae</taxon>
        <taxon>Nakaseomyces</taxon>
    </lineage>
</organism>
<feature type="chain" id="PRO_0000333456" description="U1 small nuclear ribonucleoprotein component SNU71">
    <location>
        <begin position="1"/>
        <end position="613"/>
    </location>
</feature>
<feature type="region of interest" description="Disordered" evidence="3">
    <location>
        <begin position="333"/>
        <end position="384"/>
    </location>
</feature>
<feature type="coiled-coil region" evidence="2">
    <location>
        <begin position="293"/>
        <end position="332"/>
    </location>
</feature>
<feature type="coiled-coil region" evidence="2">
    <location>
        <begin position="367"/>
        <end position="443"/>
    </location>
</feature>
<feature type="compositionally biased region" description="Acidic residues" evidence="3">
    <location>
        <begin position="359"/>
        <end position="375"/>
    </location>
</feature>
<accession>Q6FTU2</accession>
<evidence type="ECO:0000250" key="1"/>
<evidence type="ECO:0000255" key="2"/>
<evidence type="ECO:0000256" key="3">
    <source>
        <dbReference type="SAM" id="MobiDB-lite"/>
    </source>
</evidence>
<evidence type="ECO:0000305" key="4"/>
<comment type="function">
    <text evidence="1">Component of the U1 snRNP particle, which recognizes and binds the 5'-splice site of pre-mRNA. Together with other non-snRNP factors, U1 snRNP forms the spliceosomal commitment complex, that targets pre-mRNA to the splicing pathway (By similarity).</text>
</comment>
<comment type="subunit">
    <text evidence="1">Component of the U1 snRNP particle, a subcomplex of the spliceosome.</text>
</comment>
<comment type="subcellular location">
    <subcellularLocation>
        <location evidence="1">Cytoplasm</location>
    </subcellularLocation>
    <subcellularLocation>
        <location evidence="1">Nucleus</location>
    </subcellularLocation>
</comment>
<comment type="similarity">
    <text evidence="4">Belongs to the SNU71 family.</text>
</comment>
<protein>
    <recommendedName>
        <fullName>U1 small nuclear ribonucleoprotein component SNU71</fullName>
    </recommendedName>
</protein>
<gene>
    <name type="primary">SNU71</name>
    <name type="ordered locus">CAGL0F08811g</name>
</gene>
<keyword id="KW-0175">Coiled coil</keyword>
<keyword id="KW-0963">Cytoplasm</keyword>
<keyword id="KW-0507">mRNA processing</keyword>
<keyword id="KW-0508">mRNA splicing</keyword>
<keyword id="KW-0539">Nucleus</keyword>
<keyword id="KW-1185">Reference proteome</keyword>
<keyword id="KW-0687">Ribonucleoprotein</keyword>
<keyword id="KW-0694">RNA-binding</keyword>
<keyword id="KW-0747">Spliceosome</keyword>